<proteinExistence type="inferred from homology"/>
<feature type="chain" id="PRO_1000067246" description="2-phospho-L-lactate transferase">
    <location>
        <begin position="1"/>
        <end position="309"/>
    </location>
</feature>
<feature type="binding site" evidence="1">
    <location>
        <position position="50"/>
    </location>
    <ligand>
        <name>7,8-didemethyl-8-hydroxy-5-deazariboflavin</name>
        <dbReference type="ChEBI" id="CHEBI:59904"/>
    </ligand>
</feature>
<feature type="binding site" evidence="1">
    <location>
        <position position="89"/>
    </location>
    <ligand>
        <name>7,8-didemethyl-8-hydroxy-5-deazariboflavin</name>
        <dbReference type="ChEBI" id="CHEBI:59904"/>
    </ligand>
</feature>
<protein>
    <recommendedName>
        <fullName evidence="1">2-phospho-L-lactate transferase</fullName>
        <ecNumber evidence="1">2.7.8.28</ecNumber>
    </recommendedName>
</protein>
<accession>A4FZ98</accession>
<dbReference type="EC" id="2.7.8.28" evidence="1"/>
<dbReference type="EMBL" id="CP000609">
    <property type="protein sequence ID" value="ABO35532.1"/>
    <property type="molecule type" value="Genomic_DNA"/>
</dbReference>
<dbReference type="RefSeq" id="WP_011868985.1">
    <property type="nucleotide sequence ID" value="NC_009135.1"/>
</dbReference>
<dbReference type="SMR" id="A4FZ98"/>
<dbReference type="STRING" id="402880.MmarC5_1234"/>
<dbReference type="GeneID" id="4929043"/>
<dbReference type="KEGG" id="mmq:MmarC5_1234"/>
<dbReference type="eggNOG" id="arCOG04395">
    <property type="taxonomic scope" value="Archaea"/>
</dbReference>
<dbReference type="HOGENOM" id="CLU_055795_1_0_2"/>
<dbReference type="OrthoDB" id="59563at2157"/>
<dbReference type="UniPathway" id="UPA00071"/>
<dbReference type="Proteomes" id="UP000000253">
    <property type="component" value="Chromosome"/>
</dbReference>
<dbReference type="GO" id="GO:0043743">
    <property type="term" value="F:LPPG:FO 2-phospho-L-lactate transferase activity"/>
    <property type="evidence" value="ECO:0007669"/>
    <property type="project" value="UniProtKB-EC"/>
</dbReference>
<dbReference type="GO" id="GO:0000287">
    <property type="term" value="F:magnesium ion binding"/>
    <property type="evidence" value="ECO:0007669"/>
    <property type="project" value="InterPro"/>
</dbReference>
<dbReference type="GO" id="GO:0052645">
    <property type="term" value="P:F420-0 metabolic process"/>
    <property type="evidence" value="ECO:0007669"/>
    <property type="project" value="UniProtKB-UniRule"/>
</dbReference>
<dbReference type="CDD" id="cd07186">
    <property type="entry name" value="CofD_like"/>
    <property type="match status" value="1"/>
</dbReference>
<dbReference type="Gene3D" id="1.10.8.240">
    <property type="entry name" value="CofD-like domain"/>
    <property type="match status" value="1"/>
</dbReference>
<dbReference type="Gene3D" id="3.40.50.10680">
    <property type="entry name" value="CofD-like domains"/>
    <property type="match status" value="1"/>
</dbReference>
<dbReference type="HAMAP" id="MF_01257">
    <property type="entry name" value="CofD"/>
    <property type="match status" value="1"/>
</dbReference>
<dbReference type="InterPro" id="IPR002882">
    <property type="entry name" value="CofD"/>
</dbReference>
<dbReference type="InterPro" id="IPR038136">
    <property type="entry name" value="CofD-like_dom_sf"/>
</dbReference>
<dbReference type="InterPro" id="IPR010115">
    <property type="entry name" value="FbiA/CofD"/>
</dbReference>
<dbReference type="NCBIfam" id="TIGR01819">
    <property type="entry name" value="F420_cofD"/>
    <property type="match status" value="1"/>
</dbReference>
<dbReference type="PANTHER" id="PTHR43007">
    <property type="entry name" value="2-PHOSPHO-L-LACTATE TRANSFERASE"/>
    <property type="match status" value="1"/>
</dbReference>
<dbReference type="PANTHER" id="PTHR43007:SF1">
    <property type="entry name" value="2-PHOSPHO-L-LACTATE TRANSFERASE"/>
    <property type="match status" value="1"/>
</dbReference>
<dbReference type="Pfam" id="PF01933">
    <property type="entry name" value="CofD"/>
    <property type="match status" value="1"/>
</dbReference>
<dbReference type="SUPFAM" id="SSF142338">
    <property type="entry name" value="CofD-like"/>
    <property type="match status" value="1"/>
</dbReference>
<keyword id="KW-0460">Magnesium</keyword>
<keyword id="KW-0808">Transferase</keyword>
<name>COFD_METM5</name>
<gene>
    <name evidence="1" type="primary">cofD</name>
    <name type="ordered locus">MmarC5_1234</name>
</gene>
<organism>
    <name type="scientific">Methanococcus maripaludis (strain C5 / ATCC BAA-1333)</name>
    <dbReference type="NCBI Taxonomy" id="402880"/>
    <lineage>
        <taxon>Archaea</taxon>
        <taxon>Methanobacteriati</taxon>
        <taxon>Methanobacteriota</taxon>
        <taxon>Methanomada group</taxon>
        <taxon>Methanococci</taxon>
        <taxon>Methanococcales</taxon>
        <taxon>Methanococcaceae</taxon>
        <taxon>Methanococcus</taxon>
    </lineage>
</organism>
<sequence>MNITILSGGTGTPKLIQGFKEIIPNEDISVIVNTGEDTYIGDIYLSPDIDTVLYTFSDLINDETWYGLKGDTFICHEQLKKFGFDEVLKIGDKDRALKMHKASSLKNGVPMSEIVDIERKSLSLKSKIYPMSNERVESKVLIEENNEKILLKFHDFWIFRKGNAKVLDIFYENSNYAKAADGVIKAIEESDFILIGPSNPITSIGPILSISEIKNALKEKLVFAVSPIVGENPVSGPAGTLMNAKGYPVSAVGVYEYYKDIVDVLVLDNSDINKKKDINCEVLYANTIMKTIDDKITLARNILDYYKSR</sequence>
<reference key="1">
    <citation type="submission" date="2007-03" db="EMBL/GenBank/DDBJ databases">
        <title>Complete sequence of chromosome of Methanococcus maripaludis C5.</title>
        <authorList>
            <consortium name="US DOE Joint Genome Institute"/>
            <person name="Copeland A."/>
            <person name="Lucas S."/>
            <person name="Lapidus A."/>
            <person name="Barry K."/>
            <person name="Glavina del Rio T."/>
            <person name="Dalin E."/>
            <person name="Tice H."/>
            <person name="Pitluck S."/>
            <person name="Chertkov O."/>
            <person name="Brettin T."/>
            <person name="Bruce D."/>
            <person name="Han C."/>
            <person name="Detter J.C."/>
            <person name="Schmutz J."/>
            <person name="Larimer F."/>
            <person name="Land M."/>
            <person name="Hauser L."/>
            <person name="Kyrpides N."/>
            <person name="Mikhailova N."/>
            <person name="Sieprawska-Lupa M."/>
            <person name="Whitman W.B."/>
            <person name="Richardson P."/>
        </authorList>
    </citation>
    <scope>NUCLEOTIDE SEQUENCE [LARGE SCALE GENOMIC DNA]</scope>
    <source>
        <strain>C5 / ATCC BAA-1333</strain>
    </source>
</reference>
<comment type="function">
    <text evidence="1">Catalyzes the transfer of the 2-phospholactate moiety from (2S)-lactyl-2-diphospho-5'-guanosine to 7,8-didemethyl-8-hydroxy-5-deazariboflavin (FO) with the formation of oxidized coenzyme F420-0 and GMP.</text>
</comment>
<comment type="catalytic activity">
    <reaction evidence="1">
        <text>(2S)-lactyl-2-diphospho-5'-guanosine + 7,8-didemethyl-8-hydroxy-5-deazariboflavin = oxidized coenzyme F420-0 + GMP + H(+)</text>
        <dbReference type="Rhea" id="RHEA:63444"/>
        <dbReference type="ChEBI" id="CHEBI:15378"/>
        <dbReference type="ChEBI" id="CHEBI:58115"/>
        <dbReference type="ChEBI" id="CHEBI:59435"/>
        <dbReference type="ChEBI" id="CHEBI:59904"/>
        <dbReference type="ChEBI" id="CHEBI:59907"/>
        <dbReference type="EC" id="2.7.8.28"/>
    </reaction>
</comment>
<comment type="cofactor">
    <cofactor evidence="1">
        <name>Mg(2+)</name>
        <dbReference type="ChEBI" id="CHEBI:18420"/>
    </cofactor>
</comment>
<comment type="pathway">
    <text evidence="1">Cofactor biosynthesis; coenzyme F420 biosynthesis.</text>
</comment>
<comment type="subunit">
    <text evidence="1">Homodimer.</text>
</comment>
<comment type="similarity">
    <text evidence="1">Belongs to the CofD family.</text>
</comment>
<evidence type="ECO:0000255" key="1">
    <source>
        <dbReference type="HAMAP-Rule" id="MF_01257"/>
    </source>
</evidence>